<dbReference type="EMBL" id="DQ291132">
    <property type="protein sequence ID" value="ABB81978.1"/>
    <property type="molecule type" value="Genomic_DNA"/>
</dbReference>
<dbReference type="EMBL" id="DQ291132">
    <property type="protein sequence ID" value="ABB82012.1"/>
    <property type="molecule type" value="Genomic_DNA"/>
</dbReference>
<dbReference type="RefSeq" id="YP_635851.1">
    <property type="nucleotide sequence ID" value="NC_008099.1"/>
</dbReference>
<dbReference type="RefSeq" id="YP_635910.1">
    <property type="nucleotide sequence ID" value="NC_008099.1"/>
</dbReference>
<dbReference type="SMR" id="Q20ET5"/>
<dbReference type="GeneID" id="4100074"/>
<dbReference type="GeneID" id="4100115"/>
<dbReference type="GO" id="GO:0009535">
    <property type="term" value="C:chloroplast thylakoid membrane"/>
    <property type="evidence" value="ECO:0007669"/>
    <property type="project" value="UniProtKB-SubCell"/>
</dbReference>
<dbReference type="GO" id="GO:0045158">
    <property type="term" value="F:electron transporter, transferring electrons within cytochrome b6/f complex of photosystem II activity"/>
    <property type="evidence" value="ECO:0007669"/>
    <property type="project" value="UniProtKB-UniRule"/>
</dbReference>
<dbReference type="GO" id="GO:0046872">
    <property type="term" value="F:metal ion binding"/>
    <property type="evidence" value="ECO:0007669"/>
    <property type="project" value="UniProtKB-KW"/>
</dbReference>
<dbReference type="GO" id="GO:0016491">
    <property type="term" value="F:oxidoreductase activity"/>
    <property type="evidence" value="ECO:0007669"/>
    <property type="project" value="InterPro"/>
</dbReference>
<dbReference type="GO" id="GO:0015979">
    <property type="term" value="P:photosynthesis"/>
    <property type="evidence" value="ECO:0007669"/>
    <property type="project" value="UniProtKB-UniRule"/>
</dbReference>
<dbReference type="GO" id="GO:0022904">
    <property type="term" value="P:respiratory electron transport chain"/>
    <property type="evidence" value="ECO:0007669"/>
    <property type="project" value="InterPro"/>
</dbReference>
<dbReference type="CDD" id="cd00284">
    <property type="entry name" value="Cytochrome_b_N"/>
    <property type="match status" value="1"/>
</dbReference>
<dbReference type="FunFam" id="1.20.810.10:FF:000001">
    <property type="entry name" value="Cytochrome b6"/>
    <property type="match status" value="1"/>
</dbReference>
<dbReference type="Gene3D" id="1.20.810.10">
    <property type="entry name" value="Cytochrome Bc1 Complex, Chain C"/>
    <property type="match status" value="1"/>
</dbReference>
<dbReference type="HAMAP" id="MF_00633">
    <property type="entry name" value="Cytb6_f_cytb6"/>
    <property type="match status" value="1"/>
</dbReference>
<dbReference type="InterPro" id="IPR005797">
    <property type="entry name" value="Cyt_b/b6_N"/>
</dbReference>
<dbReference type="InterPro" id="IPR023530">
    <property type="entry name" value="Cyt_B6_PetB"/>
</dbReference>
<dbReference type="InterPro" id="IPR027387">
    <property type="entry name" value="Cytb/b6-like_sf"/>
</dbReference>
<dbReference type="InterPro" id="IPR048259">
    <property type="entry name" value="Cytochrome_b_N_euk/bac"/>
</dbReference>
<dbReference type="InterPro" id="IPR016174">
    <property type="entry name" value="Di-haem_cyt_TM"/>
</dbReference>
<dbReference type="NCBIfam" id="NF002990">
    <property type="entry name" value="PRK03735.1"/>
    <property type="match status" value="1"/>
</dbReference>
<dbReference type="PANTHER" id="PTHR19271">
    <property type="entry name" value="CYTOCHROME B"/>
    <property type="match status" value="1"/>
</dbReference>
<dbReference type="PANTHER" id="PTHR19271:SF16">
    <property type="entry name" value="CYTOCHROME B"/>
    <property type="match status" value="1"/>
</dbReference>
<dbReference type="Pfam" id="PF00033">
    <property type="entry name" value="Cytochrome_B"/>
    <property type="match status" value="1"/>
</dbReference>
<dbReference type="PIRSF" id="PIRSF000032">
    <property type="entry name" value="Cytochrome_b6"/>
    <property type="match status" value="1"/>
</dbReference>
<dbReference type="SUPFAM" id="SSF81342">
    <property type="entry name" value="Transmembrane di-heme cytochromes"/>
    <property type="match status" value="1"/>
</dbReference>
<dbReference type="PROSITE" id="PS51002">
    <property type="entry name" value="CYTB_NTER"/>
    <property type="match status" value="1"/>
</dbReference>
<proteinExistence type="inferred from homology"/>
<accession>Q20ET5</accession>
<reference key="1">
    <citation type="journal article" date="2006" name="BMC Biol.">
        <title>The complete chloroplast DNA sequence of the green alga Oltmannsiellopsis viridis reveals a distinctive quadripartite architecture in the chloroplast genome of early diverging ulvophytes.</title>
        <authorList>
            <person name="Pombert J.-F."/>
            <person name="Lemieux C."/>
            <person name="Turmel M."/>
        </authorList>
    </citation>
    <scope>NUCLEOTIDE SEQUENCE [LARGE SCALE GENOMIC DNA]</scope>
</reference>
<gene>
    <name evidence="1" type="primary">petB</name>
</gene>
<geneLocation type="chloroplast"/>
<comment type="function">
    <text evidence="1">Component of the cytochrome b6-f complex, which mediates electron transfer between photosystem II (PSII) and photosystem I (PSI), cyclic electron flow around PSI, and state transitions.</text>
</comment>
<comment type="cofactor">
    <cofactor evidence="1">
        <name>heme b</name>
        <dbReference type="ChEBI" id="CHEBI:60344"/>
    </cofactor>
    <text evidence="1">Binds 2 heme b groups non-covalently with two histidine residues as axial ligands.</text>
</comment>
<comment type="cofactor">
    <cofactor evidence="1">
        <name>heme c</name>
        <dbReference type="ChEBI" id="CHEBI:61717"/>
    </cofactor>
    <text evidence="1">Binds one heme group covalently by a single cysteine link with no axial amino acid ligand. This heme was named heme ci.</text>
</comment>
<comment type="subunit">
    <text evidence="1">The 4 large subunits of the cytochrome b6-f complex are cytochrome b6, subunit IV (17 kDa polypeptide, PetD), cytochrome f and the Rieske protein, while the 4 small subunits are PetG, PetL, PetM and PetN. The complex functions as a dimer.</text>
</comment>
<comment type="subcellular location">
    <subcellularLocation>
        <location evidence="1">Plastid</location>
        <location evidence="1">Chloroplast thylakoid membrane</location>
        <topology evidence="1">Multi-pass membrane protein</topology>
    </subcellularLocation>
</comment>
<comment type="miscellaneous">
    <text evidence="1">Heme 1 (or BH or b566) is high-potential and absorbs at about 566 nm, and heme 2 (or BL or b562) is low-potential and absorbs at about 562 nm.</text>
</comment>
<comment type="similarity">
    <text evidence="1">Belongs to the cytochrome b family. PetB subfamily.</text>
</comment>
<protein>
    <recommendedName>
        <fullName evidence="1">Cytochrome b6</fullName>
    </recommendedName>
</protein>
<keyword id="KW-0150">Chloroplast</keyword>
<keyword id="KW-0249">Electron transport</keyword>
<keyword id="KW-0349">Heme</keyword>
<keyword id="KW-0408">Iron</keyword>
<keyword id="KW-0472">Membrane</keyword>
<keyword id="KW-0479">Metal-binding</keyword>
<keyword id="KW-0602">Photosynthesis</keyword>
<keyword id="KW-0934">Plastid</keyword>
<keyword id="KW-0793">Thylakoid</keyword>
<keyword id="KW-0812">Transmembrane</keyword>
<keyword id="KW-1133">Transmembrane helix</keyword>
<keyword id="KW-0813">Transport</keyword>
<name>CYB6_OLTVI</name>
<evidence type="ECO:0000255" key="1">
    <source>
        <dbReference type="HAMAP-Rule" id="MF_00633"/>
    </source>
</evidence>
<sequence>MSKVYEWFDERLELQAIADDVSSKYVPPHVNIFYCLGGITFTSFLVQVATGFAMTFYYRPTVAEAFASVQYIMTDVNFGWLIRSIHRWSASMMVMMMILHVFRVYLTGGFKRPRELTWVTGVIMAVCTVSFGVTGYSLPWDQVGYWAVKIVTGVPDAIPVVGAALVELLRGGVGVGQATLTRFYSLHTFVLPLATAVFMLAHFLMIRKQGISGPL</sequence>
<feature type="chain" id="PRO_0000275326" description="Cytochrome b6">
    <location>
        <begin position="1"/>
        <end position="215"/>
    </location>
</feature>
<feature type="transmembrane region" description="Helical" evidence="1">
    <location>
        <begin position="32"/>
        <end position="52"/>
    </location>
</feature>
<feature type="transmembrane region" description="Helical" evidence="1">
    <location>
        <begin position="90"/>
        <end position="110"/>
    </location>
</feature>
<feature type="transmembrane region" description="Helical" evidence="1">
    <location>
        <begin position="116"/>
        <end position="136"/>
    </location>
</feature>
<feature type="transmembrane region" description="Helical" evidence="1">
    <location>
        <begin position="186"/>
        <end position="206"/>
    </location>
</feature>
<feature type="binding site" description="covalent" evidence="1">
    <location>
        <position position="35"/>
    </location>
    <ligand>
        <name>heme c</name>
        <dbReference type="ChEBI" id="CHEBI:61717"/>
    </ligand>
</feature>
<feature type="binding site" description="axial binding residue" evidence="1">
    <location>
        <position position="86"/>
    </location>
    <ligand>
        <name>heme b</name>
        <dbReference type="ChEBI" id="CHEBI:60344"/>
        <label>2</label>
    </ligand>
    <ligandPart>
        <name>Fe</name>
        <dbReference type="ChEBI" id="CHEBI:18248"/>
    </ligandPart>
</feature>
<feature type="binding site" description="axial binding residue" evidence="1">
    <location>
        <position position="100"/>
    </location>
    <ligand>
        <name>heme b</name>
        <dbReference type="ChEBI" id="CHEBI:60344"/>
        <label>1</label>
    </ligand>
    <ligandPart>
        <name>Fe</name>
        <dbReference type="ChEBI" id="CHEBI:18248"/>
    </ligandPart>
</feature>
<feature type="binding site" description="axial binding residue" evidence="1">
    <location>
        <position position="187"/>
    </location>
    <ligand>
        <name>heme b</name>
        <dbReference type="ChEBI" id="CHEBI:60344"/>
        <label>2</label>
    </ligand>
    <ligandPart>
        <name>Fe</name>
        <dbReference type="ChEBI" id="CHEBI:18248"/>
    </ligandPart>
</feature>
<feature type="binding site" description="axial binding residue" evidence="1">
    <location>
        <position position="202"/>
    </location>
    <ligand>
        <name>heme b</name>
        <dbReference type="ChEBI" id="CHEBI:60344"/>
        <label>1</label>
    </ligand>
    <ligandPart>
        <name>Fe</name>
        <dbReference type="ChEBI" id="CHEBI:18248"/>
    </ligandPart>
</feature>
<organism>
    <name type="scientific">Oltmannsiellopsis viridis</name>
    <name type="common">Marine flagellate</name>
    <name type="synonym">Oltmannsiella viridis</name>
    <dbReference type="NCBI Taxonomy" id="51324"/>
    <lineage>
        <taxon>Eukaryota</taxon>
        <taxon>Viridiplantae</taxon>
        <taxon>Chlorophyta</taxon>
        <taxon>Ulvophyceae</taxon>
        <taxon>Oltmannsiellopsidales</taxon>
        <taxon>Oltmannsiellopsidaceae</taxon>
        <taxon>Oltmannsiellopsis</taxon>
    </lineage>
</organism>